<comment type="function">
    <text evidence="1">Component of the cytochrome b6-f complex, which mediates electron transfer between photosystem II (PSII) and photosystem I (PSI), cyclic electron flow around PSI, and state transitions.</text>
</comment>
<comment type="subunit">
    <text evidence="1">The 4 large subunits of the cytochrome b6-f complex are cytochrome b6, subunit IV (17 kDa polypeptide, PetD), cytochrome f and the Rieske protein, while the 4 small subunits are PetG, PetL, PetM and PetN. The complex functions as a dimer.</text>
</comment>
<comment type="subcellular location">
    <subcellularLocation>
        <location evidence="1">Plastid</location>
        <location evidence="1">Chloroplast thylakoid membrane</location>
        <topology evidence="1">Single-pass membrane protein</topology>
    </subcellularLocation>
</comment>
<comment type="similarity">
    <text evidence="1">Belongs to the PetN family.</text>
</comment>
<gene>
    <name evidence="1" type="primary">petN</name>
    <name type="ordered locus">Poptr_cp013</name>
</gene>
<feature type="chain" id="PRO_0000355460" description="Cytochrome b6-f complex subunit 8">
    <location>
        <begin position="1"/>
        <end position="29"/>
    </location>
</feature>
<feature type="transmembrane region" description="Helical" evidence="1">
    <location>
        <begin position="3"/>
        <end position="23"/>
    </location>
</feature>
<name>PETN_POPTR</name>
<sequence length="29" mass="3170">MDIVSLAWAALMVVFTFSLSLVVWGRSGL</sequence>
<accession>A4GYQ1</accession>
<proteinExistence type="inferred from homology"/>
<protein>
    <recommendedName>
        <fullName evidence="1">Cytochrome b6-f complex subunit 8</fullName>
    </recommendedName>
    <alternativeName>
        <fullName evidence="1">Cytochrome b6-f complex subunit PetN</fullName>
    </alternativeName>
    <alternativeName>
        <fullName evidence="1">Cytochrome b6-f complex subunit VIII</fullName>
    </alternativeName>
</protein>
<geneLocation type="chloroplast"/>
<keyword id="KW-0150">Chloroplast</keyword>
<keyword id="KW-0249">Electron transport</keyword>
<keyword id="KW-0472">Membrane</keyword>
<keyword id="KW-0602">Photosynthesis</keyword>
<keyword id="KW-0934">Plastid</keyword>
<keyword id="KW-1185">Reference proteome</keyword>
<keyword id="KW-0793">Thylakoid</keyword>
<keyword id="KW-0812">Transmembrane</keyword>
<keyword id="KW-1133">Transmembrane helix</keyword>
<keyword id="KW-0813">Transport</keyword>
<reference key="1">
    <citation type="journal article" date="2006" name="Science">
        <title>The genome of black cottonwood, Populus trichocarpa (Torr. &amp; Gray).</title>
        <authorList>
            <person name="Tuskan G.A."/>
            <person name="Difazio S."/>
            <person name="Jansson S."/>
            <person name="Bohlmann J."/>
            <person name="Grigoriev I."/>
            <person name="Hellsten U."/>
            <person name="Putnam N."/>
            <person name="Ralph S."/>
            <person name="Rombauts S."/>
            <person name="Salamov A."/>
            <person name="Schein J."/>
            <person name="Sterck L."/>
            <person name="Aerts A."/>
            <person name="Bhalerao R.R."/>
            <person name="Bhalerao R.P."/>
            <person name="Blaudez D."/>
            <person name="Boerjan W."/>
            <person name="Brun A."/>
            <person name="Brunner A."/>
            <person name="Busov V."/>
            <person name="Campbell M."/>
            <person name="Carlson J."/>
            <person name="Chalot M."/>
            <person name="Chapman J."/>
            <person name="Chen G.-L."/>
            <person name="Cooper D."/>
            <person name="Coutinho P.M."/>
            <person name="Couturier J."/>
            <person name="Covert S."/>
            <person name="Cronk Q."/>
            <person name="Cunningham R."/>
            <person name="Davis J."/>
            <person name="Degroeve S."/>
            <person name="Dejardin A."/>
            <person name="dePamphilis C.W."/>
            <person name="Detter J."/>
            <person name="Dirks B."/>
            <person name="Dubchak I."/>
            <person name="Duplessis S."/>
            <person name="Ehlting J."/>
            <person name="Ellis B."/>
            <person name="Gendler K."/>
            <person name="Goodstein D."/>
            <person name="Gribskov M."/>
            <person name="Grimwood J."/>
            <person name="Groover A."/>
            <person name="Gunter L."/>
            <person name="Hamberger B."/>
            <person name="Heinze B."/>
            <person name="Helariutta Y."/>
            <person name="Henrissat B."/>
            <person name="Holligan D."/>
            <person name="Holt R."/>
            <person name="Huang W."/>
            <person name="Islam-Faridi N."/>
            <person name="Jones S."/>
            <person name="Jones-Rhoades M."/>
            <person name="Jorgensen R."/>
            <person name="Joshi C."/>
            <person name="Kangasjaervi J."/>
            <person name="Karlsson J."/>
            <person name="Kelleher C."/>
            <person name="Kirkpatrick R."/>
            <person name="Kirst M."/>
            <person name="Kohler A."/>
            <person name="Kalluri U."/>
            <person name="Larimer F."/>
            <person name="Leebens-Mack J."/>
            <person name="Leple J.-C."/>
            <person name="Locascio P."/>
            <person name="Lou Y."/>
            <person name="Lucas S."/>
            <person name="Martin F."/>
            <person name="Montanini B."/>
            <person name="Napoli C."/>
            <person name="Nelson D.R."/>
            <person name="Nelson C."/>
            <person name="Nieminen K."/>
            <person name="Nilsson O."/>
            <person name="Pereda V."/>
            <person name="Peter G."/>
            <person name="Philippe R."/>
            <person name="Pilate G."/>
            <person name="Poliakov A."/>
            <person name="Razumovskaya J."/>
            <person name="Richardson P."/>
            <person name="Rinaldi C."/>
            <person name="Ritland K."/>
            <person name="Rouze P."/>
            <person name="Ryaboy D."/>
            <person name="Schmutz J."/>
            <person name="Schrader J."/>
            <person name="Segerman B."/>
            <person name="Shin H."/>
            <person name="Siddiqui A."/>
            <person name="Sterky F."/>
            <person name="Terry A."/>
            <person name="Tsai C.-J."/>
            <person name="Uberbacher E."/>
            <person name="Unneberg P."/>
            <person name="Vahala J."/>
            <person name="Wall K."/>
            <person name="Wessler S."/>
            <person name="Yang G."/>
            <person name="Yin T."/>
            <person name="Douglas C."/>
            <person name="Marra M."/>
            <person name="Sandberg G."/>
            <person name="Van de Peer Y."/>
            <person name="Rokhsar D.S."/>
        </authorList>
    </citation>
    <scope>NUCLEOTIDE SEQUENCE [LARGE SCALE GENOMIC DNA]</scope>
    <source>
        <strain>cv. Nisqually</strain>
    </source>
</reference>
<evidence type="ECO:0000255" key="1">
    <source>
        <dbReference type="HAMAP-Rule" id="MF_00395"/>
    </source>
</evidence>
<organism>
    <name type="scientific">Populus trichocarpa</name>
    <name type="common">Western balsam poplar</name>
    <name type="synonym">Populus balsamifera subsp. trichocarpa</name>
    <dbReference type="NCBI Taxonomy" id="3694"/>
    <lineage>
        <taxon>Eukaryota</taxon>
        <taxon>Viridiplantae</taxon>
        <taxon>Streptophyta</taxon>
        <taxon>Embryophyta</taxon>
        <taxon>Tracheophyta</taxon>
        <taxon>Spermatophyta</taxon>
        <taxon>Magnoliopsida</taxon>
        <taxon>eudicotyledons</taxon>
        <taxon>Gunneridae</taxon>
        <taxon>Pentapetalae</taxon>
        <taxon>rosids</taxon>
        <taxon>fabids</taxon>
        <taxon>Malpighiales</taxon>
        <taxon>Salicaceae</taxon>
        <taxon>Saliceae</taxon>
        <taxon>Populus</taxon>
    </lineage>
</organism>
<dbReference type="EMBL" id="EF489041">
    <property type="protein sequence ID" value="ABO36695.1"/>
    <property type="molecule type" value="Genomic_DNA"/>
</dbReference>
<dbReference type="RefSeq" id="YP_001109492.1">
    <property type="nucleotide sequence ID" value="NC_009143.1"/>
</dbReference>
<dbReference type="SMR" id="A4GYQ1"/>
<dbReference type="FunCoup" id="A4GYQ1">
    <property type="interactions" value="34"/>
</dbReference>
<dbReference type="STRING" id="3694.A4GYQ1"/>
<dbReference type="GeneID" id="4929647"/>
<dbReference type="KEGG" id="pop:4929647"/>
<dbReference type="InParanoid" id="A4GYQ1"/>
<dbReference type="Proteomes" id="UP000006729">
    <property type="component" value="Chloroplast"/>
</dbReference>
<dbReference type="GO" id="GO:0009535">
    <property type="term" value="C:chloroplast thylakoid membrane"/>
    <property type="evidence" value="ECO:0007669"/>
    <property type="project" value="UniProtKB-SubCell"/>
</dbReference>
<dbReference type="GO" id="GO:0009512">
    <property type="term" value="C:cytochrome b6f complex"/>
    <property type="evidence" value="ECO:0007669"/>
    <property type="project" value="InterPro"/>
</dbReference>
<dbReference type="GO" id="GO:0045158">
    <property type="term" value="F:electron transporter, transferring electrons within cytochrome b6/f complex of photosystem II activity"/>
    <property type="evidence" value="ECO:0007669"/>
    <property type="project" value="InterPro"/>
</dbReference>
<dbReference type="GO" id="GO:0017004">
    <property type="term" value="P:cytochrome complex assembly"/>
    <property type="evidence" value="ECO:0007669"/>
    <property type="project" value="UniProtKB-UniRule"/>
</dbReference>
<dbReference type="GO" id="GO:0015979">
    <property type="term" value="P:photosynthesis"/>
    <property type="evidence" value="ECO:0007669"/>
    <property type="project" value="UniProtKB-KW"/>
</dbReference>
<dbReference type="HAMAP" id="MF_00395">
    <property type="entry name" value="Cytb6_f_PetN"/>
    <property type="match status" value="1"/>
</dbReference>
<dbReference type="InterPro" id="IPR036143">
    <property type="entry name" value="Cytochr_b6-f_cplx_su8_sf"/>
</dbReference>
<dbReference type="InterPro" id="IPR005497">
    <property type="entry name" value="Cytochrome_b6-f_cplx_su8"/>
</dbReference>
<dbReference type="Pfam" id="PF03742">
    <property type="entry name" value="PetN"/>
    <property type="match status" value="1"/>
</dbReference>
<dbReference type="SUPFAM" id="SSF103451">
    <property type="entry name" value="PetN subunit of the cytochrome b6f complex"/>
    <property type="match status" value="1"/>
</dbReference>